<reference key="1">
    <citation type="submission" date="2008-10" db="EMBL/GenBank/DDBJ databases">
        <title>Genome sequence of Bacillus cereus B4264.</title>
        <authorList>
            <person name="Dodson R.J."/>
            <person name="Durkin A.S."/>
            <person name="Rosovitz M.J."/>
            <person name="Rasko D.A."/>
            <person name="Hoffmaster A."/>
            <person name="Ravel J."/>
            <person name="Sutton G."/>
        </authorList>
    </citation>
    <scope>NUCLEOTIDE SEQUENCE [LARGE SCALE GENOMIC DNA]</scope>
    <source>
        <strain>B4264</strain>
    </source>
</reference>
<protein>
    <recommendedName>
        <fullName evidence="1">Small ribosomal subunit protein uS7</fullName>
    </recommendedName>
    <alternativeName>
        <fullName evidence="2">30S ribosomal protein S7</fullName>
    </alternativeName>
</protein>
<evidence type="ECO:0000255" key="1">
    <source>
        <dbReference type="HAMAP-Rule" id="MF_00480"/>
    </source>
</evidence>
<evidence type="ECO:0000305" key="2"/>
<accession>B7HJ44</accession>
<organism>
    <name type="scientific">Bacillus cereus (strain B4264)</name>
    <dbReference type="NCBI Taxonomy" id="405532"/>
    <lineage>
        <taxon>Bacteria</taxon>
        <taxon>Bacillati</taxon>
        <taxon>Bacillota</taxon>
        <taxon>Bacilli</taxon>
        <taxon>Bacillales</taxon>
        <taxon>Bacillaceae</taxon>
        <taxon>Bacillus</taxon>
        <taxon>Bacillus cereus group</taxon>
    </lineage>
</organism>
<feature type="chain" id="PRO_1000125894" description="Small ribosomal subunit protein uS7">
    <location>
        <begin position="1"/>
        <end position="156"/>
    </location>
</feature>
<name>RS7_BACC4</name>
<proteinExistence type="inferred from homology"/>
<comment type="function">
    <text evidence="1">One of the primary rRNA binding proteins, it binds directly to 16S rRNA where it nucleates assembly of the head domain of the 30S subunit. Is located at the subunit interface close to the decoding center, probably blocks exit of the E-site tRNA.</text>
</comment>
<comment type="subunit">
    <text evidence="1">Part of the 30S ribosomal subunit. Contacts proteins S9 and S11.</text>
</comment>
<comment type="similarity">
    <text evidence="1">Belongs to the universal ribosomal protein uS7 family.</text>
</comment>
<sequence>MPRKGPVAKRDVLPDPMYNSKLVTRLINKMMVDGKKGKSQTILYNAFDIVNERTGKEPMEVFEQALKNIMPVLEVRARRVGGANYQVPVEVRPERRTTLGLRWLVNYARLRGEKTMEERLANEILDAANNAGASVKKREDTHKMAEANKAFAHYRW</sequence>
<dbReference type="EMBL" id="CP001176">
    <property type="protein sequence ID" value="ACK61270.1"/>
    <property type="molecule type" value="Genomic_DNA"/>
</dbReference>
<dbReference type="RefSeq" id="WP_001137491.1">
    <property type="nucleotide sequence ID" value="NZ_VEHB01000017.1"/>
</dbReference>
<dbReference type="SMR" id="B7HJ44"/>
<dbReference type="KEGG" id="bcb:BCB4264_A0127"/>
<dbReference type="HOGENOM" id="CLU_072226_1_1_9"/>
<dbReference type="Proteomes" id="UP000007096">
    <property type="component" value="Chromosome"/>
</dbReference>
<dbReference type="GO" id="GO:0015935">
    <property type="term" value="C:small ribosomal subunit"/>
    <property type="evidence" value="ECO:0007669"/>
    <property type="project" value="InterPro"/>
</dbReference>
<dbReference type="GO" id="GO:0019843">
    <property type="term" value="F:rRNA binding"/>
    <property type="evidence" value="ECO:0007669"/>
    <property type="project" value="UniProtKB-UniRule"/>
</dbReference>
<dbReference type="GO" id="GO:0003735">
    <property type="term" value="F:structural constituent of ribosome"/>
    <property type="evidence" value="ECO:0007669"/>
    <property type="project" value="InterPro"/>
</dbReference>
<dbReference type="GO" id="GO:0000049">
    <property type="term" value="F:tRNA binding"/>
    <property type="evidence" value="ECO:0007669"/>
    <property type="project" value="UniProtKB-UniRule"/>
</dbReference>
<dbReference type="GO" id="GO:0006412">
    <property type="term" value="P:translation"/>
    <property type="evidence" value="ECO:0007669"/>
    <property type="project" value="UniProtKB-UniRule"/>
</dbReference>
<dbReference type="CDD" id="cd14869">
    <property type="entry name" value="uS7_Bacteria"/>
    <property type="match status" value="1"/>
</dbReference>
<dbReference type="FunFam" id="1.10.455.10:FF:000001">
    <property type="entry name" value="30S ribosomal protein S7"/>
    <property type="match status" value="1"/>
</dbReference>
<dbReference type="Gene3D" id="1.10.455.10">
    <property type="entry name" value="Ribosomal protein S7 domain"/>
    <property type="match status" value="1"/>
</dbReference>
<dbReference type="HAMAP" id="MF_00480_B">
    <property type="entry name" value="Ribosomal_uS7_B"/>
    <property type="match status" value="1"/>
</dbReference>
<dbReference type="InterPro" id="IPR000235">
    <property type="entry name" value="Ribosomal_uS7"/>
</dbReference>
<dbReference type="InterPro" id="IPR005717">
    <property type="entry name" value="Ribosomal_uS7_bac/org-type"/>
</dbReference>
<dbReference type="InterPro" id="IPR020606">
    <property type="entry name" value="Ribosomal_uS7_CS"/>
</dbReference>
<dbReference type="InterPro" id="IPR023798">
    <property type="entry name" value="Ribosomal_uS7_dom"/>
</dbReference>
<dbReference type="InterPro" id="IPR036823">
    <property type="entry name" value="Ribosomal_uS7_dom_sf"/>
</dbReference>
<dbReference type="NCBIfam" id="TIGR01029">
    <property type="entry name" value="rpsG_bact"/>
    <property type="match status" value="1"/>
</dbReference>
<dbReference type="PANTHER" id="PTHR11205">
    <property type="entry name" value="RIBOSOMAL PROTEIN S7"/>
    <property type="match status" value="1"/>
</dbReference>
<dbReference type="Pfam" id="PF00177">
    <property type="entry name" value="Ribosomal_S7"/>
    <property type="match status" value="1"/>
</dbReference>
<dbReference type="PIRSF" id="PIRSF002122">
    <property type="entry name" value="RPS7p_RPS7a_RPS5e_RPS7o"/>
    <property type="match status" value="1"/>
</dbReference>
<dbReference type="SUPFAM" id="SSF47973">
    <property type="entry name" value="Ribosomal protein S7"/>
    <property type="match status" value="1"/>
</dbReference>
<dbReference type="PROSITE" id="PS00052">
    <property type="entry name" value="RIBOSOMAL_S7"/>
    <property type="match status" value="1"/>
</dbReference>
<keyword id="KW-0687">Ribonucleoprotein</keyword>
<keyword id="KW-0689">Ribosomal protein</keyword>
<keyword id="KW-0694">RNA-binding</keyword>
<keyword id="KW-0699">rRNA-binding</keyword>
<keyword id="KW-0820">tRNA-binding</keyword>
<gene>
    <name evidence="1" type="primary">rpsG</name>
    <name type="ordered locus">BCB4264_A0127</name>
</gene>